<feature type="chain" id="PRO_1000123617" description="Translational regulator CsrA">
    <location>
        <begin position="1"/>
        <end position="82"/>
    </location>
</feature>
<comment type="function">
    <text evidence="1">A translational regulator that binds mRNA to regulate translation initiation and/or mRNA stability. Usually binds in the 5'-UTR at or near the Shine-Dalgarno sequence preventing ribosome-binding, thus repressing translation. Its main target seems to be the major flagellin gene, while its function is anatagonized by FliW.</text>
</comment>
<comment type="subunit">
    <text evidence="1">Homodimer; the beta-strands of each monomer intercalate to form a hydrophobic core, while the alpha-helices form wings that extend away from the core.</text>
</comment>
<comment type="subcellular location">
    <subcellularLocation>
        <location evidence="1">Cytoplasm</location>
    </subcellularLocation>
</comment>
<comment type="similarity">
    <text evidence="1">Belongs to the CsrA/RsmA family.</text>
</comment>
<name>CSRA_BREBN</name>
<proteinExistence type="inferred from homology"/>
<organism>
    <name type="scientific">Brevibacillus brevis (strain 47 / JCM 6285 / NBRC 100599)</name>
    <dbReference type="NCBI Taxonomy" id="358681"/>
    <lineage>
        <taxon>Bacteria</taxon>
        <taxon>Bacillati</taxon>
        <taxon>Bacillota</taxon>
        <taxon>Bacilli</taxon>
        <taxon>Bacillales</taxon>
        <taxon>Paenibacillaceae</taxon>
        <taxon>Brevibacillus</taxon>
    </lineage>
</organism>
<keyword id="KW-1005">Bacterial flagellum biogenesis</keyword>
<keyword id="KW-0963">Cytoplasm</keyword>
<keyword id="KW-1185">Reference proteome</keyword>
<keyword id="KW-0678">Repressor</keyword>
<keyword id="KW-0694">RNA-binding</keyword>
<keyword id="KW-0810">Translation regulation</keyword>
<accession>C0Z6W4</accession>
<sequence length="82" mass="9529">MLVLSRKKNESIMIGDTIEIKIISIDGDQIKLGIDAPRNLDVYRKEIFDAIQEENRLAMKSQSDWASMKQLFQTSKEKRDDQ</sequence>
<protein>
    <recommendedName>
        <fullName evidence="1">Translational regulator CsrA</fullName>
    </recommendedName>
</protein>
<reference key="1">
    <citation type="submission" date="2005-03" db="EMBL/GenBank/DDBJ databases">
        <title>Brevibacillus brevis strain 47, complete genome.</title>
        <authorList>
            <person name="Hosoyama A."/>
            <person name="Yamada R."/>
            <person name="Hongo Y."/>
            <person name="Terui Y."/>
            <person name="Ankai A."/>
            <person name="Masuyama W."/>
            <person name="Sekiguchi M."/>
            <person name="Takeda T."/>
            <person name="Asano K."/>
            <person name="Ohji S."/>
            <person name="Ichikawa N."/>
            <person name="Narita S."/>
            <person name="Aoki N."/>
            <person name="Miura H."/>
            <person name="Matsushita S."/>
            <person name="Sekigawa T."/>
            <person name="Yamagata H."/>
            <person name="Yoshikawa H."/>
            <person name="Udaka S."/>
            <person name="Tanikawa S."/>
            <person name="Fujita N."/>
        </authorList>
    </citation>
    <scope>NUCLEOTIDE SEQUENCE [LARGE SCALE GENOMIC DNA]</scope>
    <source>
        <strain>47 / JCM 6285 / NBRC 100599</strain>
    </source>
</reference>
<evidence type="ECO:0000255" key="1">
    <source>
        <dbReference type="HAMAP-Rule" id="MF_00167"/>
    </source>
</evidence>
<gene>
    <name evidence="1" type="primary">csrA</name>
    <name type="ordered locus">BBR47_53360</name>
</gene>
<dbReference type="EMBL" id="AP008955">
    <property type="protein sequence ID" value="BAH46313.1"/>
    <property type="molecule type" value="Genomic_DNA"/>
</dbReference>
<dbReference type="RefSeq" id="WP_015893562.1">
    <property type="nucleotide sequence ID" value="NC_012491.1"/>
</dbReference>
<dbReference type="SMR" id="C0Z6W4"/>
<dbReference type="STRING" id="358681.BBR47_53360"/>
<dbReference type="KEGG" id="bbe:BBR47_53360"/>
<dbReference type="eggNOG" id="COG1551">
    <property type="taxonomic scope" value="Bacteria"/>
</dbReference>
<dbReference type="HOGENOM" id="CLU_164837_0_0_9"/>
<dbReference type="Proteomes" id="UP000001877">
    <property type="component" value="Chromosome"/>
</dbReference>
<dbReference type="GO" id="GO:0005829">
    <property type="term" value="C:cytosol"/>
    <property type="evidence" value="ECO:0007669"/>
    <property type="project" value="TreeGrafter"/>
</dbReference>
<dbReference type="GO" id="GO:0048027">
    <property type="term" value="F:mRNA 5'-UTR binding"/>
    <property type="evidence" value="ECO:0007669"/>
    <property type="project" value="UniProtKB-UniRule"/>
</dbReference>
<dbReference type="GO" id="GO:0044781">
    <property type="term" value="P:bacterial-type flagellum organization"/>
    <property type="evidence" value="ECO:0007669"/>
    <property type="project" value="UniProtKB-KW"/>
</dbReference>
<dbReference type="GO" id="GO:0006402">
    <property type="term" value="P:mRNA catabolic process"/>
    <property type="evidence" value="ECO:0007669"/>
    <property type="project" value="InterPro"/>
</dbReference>
<dbReference type="GO" id="GO:0045947">
    <property type="term" value="P:negative regulation of translational initiation"/>
    <property type="evidence" value="ECO:0007669"/>
    <property type="project" value="UniProtKB-UniRule"/>
</dbReference>
<dbReference type="GO" id="GO:1902208">
    <property type="term" value="P:regulation of bacterial-type flagellum assembly"/>
    <property type="evidence" value="ECO:0007669"/>
    <property type="project" value="UniProtKB-UniRule"/>
</dbReference>
<dbReference type="GO" id="GO:0006109">
    <property type="term" value="P:regulation of carbohydrate metabolic process"/>
    <property type="evidence" value="ECO:0007669"/>
    <property type="project" value="InterPro"/>
</dbReference>
<dbReference type="FunFam" id="2.60.40.4380:FF:000002">
    <property type="entry name" value="Translational regulator CsrA"/>
    <property type="match status" value="1"/>
</dbReference>
<dbReference type="Gene3D" id="2.60.40.4380">
    <property type="entry name" value="Translational regulator CsrA"/>
    <property type="match status" value="1"/>
</dbReference>
<dbReference type="HAMAP" id="MF_00167">
    <property type="entry name" value="CsrA"/>
    <property type="match status" value="1"/>
</dbReference>
<dbReference type="InterPro" id="IPR003751">
    <property type="entry name" value="CsrA"/>
</dbReference>
<dbReference type="InterPro" id="IPR036107">
    <property type="entry name" value="CsrA_sf"/>
</dbReference>
<dbReference type="NCBIfam" id="TIGR00202">
    <property type="entry name" value="csrA"/>
    <property type="match status" value="1"/>
</dbReference>
<dbReference type="NCBIfam" id="NF002469">
    <property type="entry name" value="PRK01712.1"/>
    <property type="match status" value="1"/>
</dbReference>
<dbReference type="PANTHER" id="PTHR34984">
    <property type="entry name" value="CARBON STORAGE REGULATOR"/>
    <property type="match status" value="1"/>
</dbReference>
<dbReference type="PANTHER" id="PTHR34984:SF1">
    <property type="entry name" value="CARBON STORAGE REGULATOR"/>
    <property type="match status" value="1"/>
</dbReference>
<dbReference type="Pfam" id="PF02599">
    <property type="entry name" value="CsrA"/>
    <property type="match status" value="1"/>
</dbReference>
<dbReference type="SUPFAM" id="SSF117130">
    <property type="entry name" value="CsrA-like"/>
    <property type="match status" value="1"/>
</dbReference>